<sequence>MQQQQQPSIDQLPEPTASTSNSATTKPTIATATTSTTTTSGNNFHQQLQATTAATMQRLRTTFTRSRTPTGAEMKMQNSLEVPKQVRSASFDEMQLESQRASSSLLKQQSSSSASADERSSEAGFLQVPLAAHQQRSHSFDSATASAGSDDSGTFLEVPRRLKARRSSSTKTPPPCIHCHYLEEYERRMTAEQRYFIDHRELTALSYSNTSSEASEDEDEVEGHNAEEEEEGSAAIEDAEEETTEAATEEADEDPRTEVESEHDHDPDDDAALEMDIRIGNMSQGSSIEESRARLPRQMRRHTIGSSSVTSASEDEGLEGSDNGSPHFGNTLLPPQPTTPCGITFTLSPTNGDYPSPPHLPLDPGSPPISPCSSNSGRLPALAPIISTPCSSADADDAGAAMGLPVRARRRSISRQEAIFVEPTGNSLENVSHEEVDNSNTKSSVDTADSLDEASTMATCGSPGAAGGSGASSSHHNAFVVRDIYLMVPDLKRDRAASVDSCFSKLSSNAKTEELQPSADGCFLTVPNINATRSRSVDIVLPTDEQARYKALSMTGSTVTYADGRTASASNSRRPIRIVPDWTENAVQGEHYWKPTSASGDLCCLNEECIKSGQRMKCSACQLVAHHNCIPFVNEKSTLACKPTYRDVGIRQYREQTTTHHHWVHRKLEKGKCKQCGKFFPMKQAVQSKLFGSKEIVALACAWCHEIYHNKEACFNQAKIGEECRLGNYAPIIVPPSWIVKLPTKGNFKSSIRVSNKNNAASGSGGGGAGGGAGGGGGKSKKQTQRRQKGKEEKKEPRAFIVKPIPSPEVIPVIVFINPKSGGNQGHKLLGKFQHLLNPRQVFDLTQGGPKMGLDMFRKAPNLRVLACGGDGTVGWVLSVLDQIQPPLQPAPAVGVLPLGTGNDLARALGWGGGYTDEPIGKILREIGMSQCVLMDRWRVKVTPNDDVTDDHVDRSKPNVPLNVINNYFSFGVDAHIALEFHEAREAHPERFNSRLRNKMYYGQMGGKDLILRQYRNLSQWVTLECDGQDFTGKLRDAGCHAVLFLNIPSYGGGTHPWNDSFGASKPSIDDGLMEVVGLTTYQLPMLQAGMHGTCICQCRKARIITKRTIPMQVDGEACRVKPSVIEIELLNKALMLSKRKHGRGDVQVNPLEKMQLHILRVTMQQYEQYHYDKEMLRKLANKLGQIEIESQCDLEHVRNMLNTKFEESISYPKVSQDWCFIDSCTAEHYFRIDRAQEHLHYICDIAIDELYILDHEAATMPQTPDQERSFAAFSQRQAQNERRQMDQAQGRGPGSTDEDLQIGSKPIKVMKWKSPILEQTSDAILLAAQSGDLNMLRALHEQGYSLQSVNKNGQTALHFACKYNHRDIVKYIIASATRRLINMADKELGQTALHIAAEQNRRDICVMLVAAGAHLDTLDSGGNTPMMVAFNKNANEIATYLESKQGTQPVDGWLDD</sequence>
<feature type="chain" id="PRO_0000218474" description="Eye-specific diacylglycerol kinase">
    <location>
        <begin position="1"/>
        <end position="1457"/>
    </location>
</feature>
<feature type="domain" description="DAGKc" evidence="1">
    <location>
        <begin position="808"/>
        <end position="944"/>
    </location>
</feature>
<feature type="repeat" description="ANK 1">
    <location>
        <begin position="1320"/>
        <end position="1349"/>
    </location>
</feature>
<feature type="repeat" description="ANK 2">
    <location>
        <begin position="1353"/>
        <end position="1382"/>
    </location>
</feature>
<feature type="repeat" description="ANK 3">
    <location>
        <begin position="1389"/>
        <end position="1418"/>
    </location>
</feature>
<feature type="repeat" description="ANK 4">
    <location>
        <begin position="1422"/>
        <end position="1451"/>
    </location>
</feature>
<feature type="zinc finger region" description="Phorbol-ester/DAG-type 1">
    <location>
        <begin position="591"/>
        <end position="641"/>
    </location>
</feature>
<feature type="zinc finger region" description="Phorbol-ester/DAG-type 2">
    <location>
        <begin position="661"/>
        <end position="724"/>
    </location>
</feature>
<feature type="region of interest" description="Disordered" evidence="2">
    <location>
        <begin position="1"/>
        <end position="123"/>
    </location>
</feature>
<feature type="region of interest" description="Disordered" evidence="2">
    <location>
        <begin position="136"/>
        <end position="177"/>
    </location>
</feature>
<feature type="region of interest" description="Disordered" evidence="2">
    <location>
        <begin position="207"/>
        <end position="339"/>
    </location>
</feature>
<feature type="region of interest" description="Disordered" evidence="2">
    <location>
        <begin position="758"/>
        <end position="799"/>
    </location>
</feature>
<feature type="region of interest" description="Disordered" evidence="2">
    <location>
        <begin position="1264"/>
        <end position="1302"/>
    </location>
</feature>
<feature type="compositionally biased region" description="Low complexity" evidence="2">
    <location>
        <begin position="22"/>
        <end position="62"/>
    </location>
</feature>
<feature type="compositionally biased region" description="Low complexity" evidence="2">
    <location>
        <begin position="98"/>
        <end position="115"/>
    </location>
</feature>
<feature type="compositionally biased region" description="Low complexity" evidence="2">
    <location>
        <begin position="141"/>
        <end position="154"/>
    </location>
</feature>
<feature type="compositionally biased region" description="Acidic residues" evidence="2">
    <location>
        <begin position="214"/>
        <end position="253"/>
    </location>
</feature>
<feature type="compositionally biased region" description="Basic and acidic residues" evidence="2">
    <location>
        <begin position="254"/>
        <end position="266"/>
    </location>
</feature>
<feature type="compositionally biased region" description="Basic residues" evidence="2">
    <location>
        <begin position="294"/>
        <end position="303"/>
    </location>
</feature>
<feature type="compositionally biased region" description="Gly residues" evidence="2">
    <location>
        <begin position="763"/>
        <end position="778"/>
    </location>
</feature>
<feature type="compositionally biased region" description="Basic residues" evidence="2">
    <location>
        <begin position="779"/>
        <end position="789"/>
    </location>
</feature>
<feature type="splice variant" id="VSP_030265" description="In isoform C." evidence="5">
    <original>MQQQQQPSIDQLPEPTASTSNSATTKPTIATATTSTTTTSGNNFHQQLQATTAATMQRLRTTFTRSRTPTGAEMKMQNSLEVPKQVRSASFDEMQLESQRASSSLLKQQSSSSASADERSSEAGFLQVPLAA</original>
    <variation>MERLLHAVREEFQTEDEYETEVDDEGNVLHRSSISSCSSSSSSSNTSSSSDGSNSTASQPLSPSLPQPRRRLQRSDSFGSVGGGVAGGVAGSGATGAGGVRRFRRSSIGMQRKSAFRQRKLDSLGAWRRKRR</variation>
    <location>
        <begin position="1"/>
        <end position="132"/>
    </location>
</feature>
<feature type="splice variant" id="VSP_030264" description="In isoform B." evidence="4">
    <original>MQQQQQPSIDQLPEPTASTSNSATTKPTIATATTSTTTTSGNNFHQQLQATTAATMQRLRTTFTRSRTPTGAEMKMQNSLEVPKQVRSASFDEMQLESQRASSSLLKQQSSSSASA</original>
    <variation>MPERSISQRDLDEIEIESDEEEEELEQGVGLSTRSRRNRRGASDSPAASRARNATNGIQNRGRERERERERERSRERFGGTNAADEARFYDDEEQRMEDDGEEDSDEDIEMLDYDT</variation>
    <location>
        <begin position="1"/>
        <end position="116"/>
    </location>
</feature>
<feature type="splice variant" id="VSP_030266" description="In isoform B." evidence="4">
    <location>
        <begin position="117"/>
        <end position="564"/>
    </location>
</feature>
<feature type="splice variant" id="VSP_030267" description="In isoform C." evidence="5">
    <location>
        <begin position="133"/>
        <end position="565"/>
    </location>
</feature>
<feature type="splice variant" id="VSP_028732" description="In isoform B." evidence="4">
    <original>S</original>
    <variation>SNKDRLFSFNEDVFGCGFS</variation>
    <location>
        <position position="1315"/>
    </location>
</feature>
<feature type="splice variant" id="VSP_028733" description="In isoform B." evidence="4">
    <original>KQGTQPVDGWLDD</original>
    <variation>QERFMHLEKQTRI</variation>
    <location>
        <begin position="1445"/>
        <end position="1457"/>
    </location>
</feature>
<feature type="sequence conflict" description="In Ref. 1; BAA04135." evidence="5" ref="1">
    <original>A</original>
    <variation>V</variation>
    <location>
        <position position="32"/>
    </location>
</feature>
<feature type="sequence conflict" description="In Ref. 1; BAA04135." evidence="5" ref="1">
    <original>S</original>
    <variation>T</variation>
    <location>
        <position position="208"/>
    </location>
</feature>
<feature type="sequence conflict" description="In Ref. 1; BAA04135." evidence="5" ref="1">
    <original>N</original>
    <variation>K</variation>
    <location>
        <position position="438"/>
    </location>
</feature>
<feature type="sequence conflict" description="In Ref. 1; BAA04135." evidence="5" ref="1">
    <original>R</original>
    <variation>RR</variation>
    <location>
        <position position="565"/>
    </location>
</feature>
<feature type="sequence conflict" description="In Ref. 1; BAA04135." evidence="5" ref="1">
    <original>K</original>
    <variation>N</variation>
    <location>
        <position position="667"/>
    </location>
</feature>
<feature type="sequence conflict" description="In Ref. 1; BAA04135." evidence="5" ref="1">
    <location>
        <begin position="679"/>
        <end position="684"/>
    </location>
</feature>
<feature type="sequence conflict" description="In Ref. 1; BAA04135." evidence="5" ref="1">
    <original>G</original>
    <variation>GGG</variation>
    <location>
        <position position="778"/>
    </location>
</feature>
<feature type="sequence conflict" description="In Ref. 5; AAQ22428." evidence="5" ref="5">
    <original>L</original>
    <variation>M</variation>
    <location>
        <position position="924"/>
    </location>
</feature>
<feature type="sequence conflict" description="In Ref. 5; AAQ22428." evidence="5" ref="5">
    <original>E</original>
    <variation>G</variation>
    <location>
        <position position="983"/>
    </location>
</feature>
<feature type="sequence conflict" description="In Ref. 5; AAQ22428." evidence="5" ref="5">
    <original>I</original>
    <variation>N</variation>
    <location>
        <position position="1128"/>
    </location>
</feature>
<comment type="function">
    <text evidence="3">Required for the maintenance of phospholipid turnover within the photoreceptor.</text>
</comment>
<comment type="catalytic activity">
    <reaction>
        <text>a 1,2-diacyl-sn-glycerol + ATP = a 1,2-diacyl-sn-glycero-3-phosphate + ADP + H(+)</text>
        <dbReference type="Rhea" id="RHEA:10272"/>
        <dbReference type="ChEBI" id="CHEBI:15378"/>
        <dbReference type="ChEBI" id="CHEBI:17815"/>
        <dbReference type="ChEBI" id="CHEBI:30616"/>
        <dbReference type="ChEBI" id="CHEBI:58608"/>
        <dbReference type="ChEBI" id="CHEBI:456216"/>
        <dbReference type="EC" id="2.7.1.107"/>
    </reaction>
</comment>
<comment type="subcellular location">
    <subcellularLocation>
        <location>Membrane</location>
        <topology>Peripheral membrane protein</topology>
    </subcellularLocation>
</comment>
<comment type="alternative products">
    <event type="alternative splicing"/>
    <isoform>
        <id>Q09103-1</id>
        <name>A</name>
        <sequence type="displayed"/>
    </isoform>
    <isoform>
        <id>Q09103-3</id>
        <name>B</name>
        <sequence type="described" ref="VSP_030264 VSP_030266 VSP_028732 VSP_028733"/>
    </isoform>
    <isoform>
        <id>Q09103-2</id>
        <name>C</name>
        <sequence type="described" ref="VSP_030265 VSP_030267"/>
    </isoform>
</comment>
<comment type="tissue specificity">
    <text evidence="3">Expressed specifically in adult eye.</text>
</comment>
<comment type="disruption phenotype">
    <text evidence="3">Flies exhibit photoreceptor cells that degenerate within a week after eclosion.</text>
</comment>
<comment type="similarity">
    <text evidence="5">Belongs to the eukaryotic diacylglycerol kinase family.</text>
</comment>
<comment type="sequence caution" evidence="5">
    <conflict type="miscellaneous discrepancy">
        <sequence resource="EMBL-CDS" id="AAQ22428"/>
    </conflict>
    <text>Intron retention.</text>
</comment>
<accession>Q09103</accession>
<accession>A8JV38</accession>
<accession>A8JV40</accession>
<accession>Q0KHU7</accession>
<accession>Q7YU71</accession>
<accession>Q8SY47</accession>
<accession>Q9W3A4</accession>
<evidence type="ECO:0000255" key="1">
    <source>
        <dbReference type="PROSITE-ProRule" id="PRU00783"/>
    </source>
</evidence>
<evidence type="ECO:0000256" key="2">
    <source>
        <dbReference type="SAM" id="MobiDB-lite"/>
    </source>
</evidence>
<evidence type="ECO:0000269" key="3">
    <source>
    </source>
</evidence>
<evidence type="ECO:0000303" key="4">
    <source ref="5"/>
</evidence>
<evidence type="ECO:0000305" key="5"/>
<proteinExistence type="evidence at transcript level"/>
<gene>
    <name type="primary">rdgA</name>
    <name type="synonym">DGK2</name>
    <name type="ORF">CG34344</name>
</gene>
<dbReference type="EC" id="2.7.1.107"/>
<dbReference type="EMBL" id="D17315">
    <property type="protein sequence ID" value="BAA04135.1"/>
    <property type="molecule type" value="mRNA"/>
</dbReference>
<dbReference type="EMBL" id="AE014298">
    <property type="protein sequence ID" value="AAF46430.2"/>
    <property type="molecule type" value="Genomic_DNA"/>
</dbReference>
<dbReference type="EMBL" id="AE014298">
    <property type="protein sequence ID" value="ABW09364.1"/>
    <property type="molecule type" value="Genomic_DNA"/>
</dbReference>
<dbReference type="EMBL" id="AE014298">
    <property type="protein sequence ID" value="ABW09365.1"/>
    <property type="molecule type" value="Genomic_DNA"/>
</dbReference>
<dbReference type="EMBL" id="AY075349">
    <property type="protein sequence ID" value="AAL68208.1"/>
    <property type="molecule type" value="mRNA"/>
</dbReference>
<dbReference type="EMBL" id="BT009959">
    <property type="protein sequence ID" value="AAQ22428.1"/>
    <property type="status" value="ALT_SEQ"/>
    <property type="molecule type" value="mRNA"/>
</dbReference>
<dbReference type="PIR" id="T13709">
    <property type="entry name" value="T13709"/>
</dbReference>
<dbReference type="RefSeq" id="NP_001096916.1">
    <molecule id="Q09103-3"/>
    <property type="nucleotide sequence ID" value="NM_001103446.2"/>
</dbReference>
<dbReference type="RefSeq" id="NP_001096917.1">
    <molecule id="Q09103-2"/>
    <property type="nucleotide sequence ID" value="NM_001103447.4"/>
</dbReference>
<dbReference type="RefSeq" id="NP_511092.2">
    <molecule id="Q09103-1"/>
    <property type="nucleotide sequence ID" value="NM_078537.3"/>
</dbReference>
<dbReference type="SMR" id="Q09103"/>
<dbReference type="BioGRID" id="58282">
    <property type="interactions" value="21"/>
</dbReference>
<dbReference type="FunCoup" id="Q09103">
    <property type="interactions" value="620"/>
</dbReference>
<dbReference type="IntAct" id="Q09103">
    <property type="interactions" value="4"/>
</dbReference>
<dbReference type="STRING" id="7227.FBpp0305778"/>
<dbReference type="GlyGen" id="Q09103">
    <property type="glycosylation" value="1 site"/>
</dbReference>
<dbReference type="PaxDb" id="7227-FBpp0305778"/>
<dbReference type="DNASU" id="31826"/>
<dbReference type="EnsemblMetazoa" id="FBtr0302660">
    <molecule id="Q09103-1"/>
    <property type="protein sequence ID" value="FBpp0291800"/>
    <property type="gene ID" value="FBgn0261549"/>
</dbReference>
<dbReference type="EnsemblMetazoa" id="FBtr0302661">
    <molecule id="Q09103-3"/>
    <property type="protein sequence ID" value="FBpp0291801"/>
    <property type="gene ID" value="FBgn0261549"/>
</dbReference>
<dbReference type="EnsemblMetazoa" id="FBtr0302662">
    <molecule id="Q09103-2"/>
    <property type="protein sequence ID" value="FBpp0291802"/>
    <property type="gene ID" value="FBgn0261549"/>
</dbReference>
<dbReference type="GeneID" id="31826"/>
<dbReference type="KEGG" id="dme:Dmel_CG42667"/>
<dbReference type="AGR" id="FB:FBgn0261549"/>
<dbReference type="CTD" id="31826"/>
<dbReference type="FlyBase" id="FBgn0261549">
    <property type="gene designation" value="rdgA"/>
</dbReference>
<dbReference type="VEuPathDB" id="VectorBase:FBgn0261549"/>
<dbReference type="eggNOG" id="KOG0782">
    <property type="taxonomic scope" value="Eukaryota"/>
</dbReference>
<dbReference type="GeneTree" id="ENSGT00940000167477"/>
<dbReference type="InParanoid" id="Q09103"/>
<dbReference type="OMA" id="NMIDNDK"/>
<dbReference type="OrthoDB" id="242257at2759"/>
<dbReference type="PhylomeDB" id="Q09103"/>
<dbReference type="BRENDA" id="2.7.1.107">
    <property type="organism ID" value="1994"/>
</dbReference>
<dbReference type="Reactome" id="R-DME-114508">
    <property type="pathway name" value="Effects of PIP2 hydrolysis"/>
</dbReference>
<dbReference type="SABIO-RK" id="Q09103"/>
<dbReference type="SignaLink" id="Q09103"/>
<dbReference type="BioGRID-ORCS" id="31826">
    <property type="hits" value="0 hits in 3 CRISPR screens"/>
</dbReference>
<dbReference type="ChiTaRS" id="rdgA">
    <property type="organism name" value="fly"/>
</dbReference>
<dbReference type="GenomeRNAi" id="31826"/>
<dbReference type="PRO" id="PR:Q09103"/>
<dbReference type="Proteomes" id="UP000000803">
    <property type="component" value="Chromosome X"/>
</dbReference>
<dbReference type="Bgee" id="FBgn0261549">
    <property type="expression patterns" value="Expressed in dorsal margin photoreceptor (Drosophila) in insect head and 268 other cell types or tissues"/>
</dbReference>
<dbReference type="ExpressionAtlas" id="Q09103">
    <property type="expression patterns" value="baseline and differential"/>
</dbReference>
<dbReference type="GO" id="GO:0005886">
    <property type="term" value="C:plasma membrane"/>
    <property type="evidence" value="ECO:0000318"/>
    <property type="project" value="GO_Central"/>
</dbReference>
<dbReference type="GO" id="GO:0005524">
    <property type="term" value="F:ATP binding"/>
    <property type="evidence" value="ECO:0007669"/>
    <property type="project" value="UniProtKB-KW"/>
</dbReference>
<dbReference type="GO" id="GO:0004143">
    <property type="term" value="F:ATP-dependent diacylglycerol kinase activity"/>
    <property type="evidence" value="ECO:0000315"/>
    <property type="project" value="FlyBase"/>
</dbReference>
<dbReference type="GO" id="GO:0008270">
    <property type="term" value="F:zinc ion binding"/>
    <property type="evidence" value="ECO:0007669"/>
    <property type="project" value="UniProtKB-KW"/>
</dbReference>
<dbReference type="GO" id="GO:0046339">
    <property type="term" value="P:diacylglycerol metabolic process"/>
    <property type="evidence" value="ECO:0000318"/>
    <property type="project" value="GO_Central"/>
</dbReference>
<dbReference type="GO" id="GO:0016056">
    <property type="term" value="P:G protein-coupled opsin signaling pathway"/>
    <property type="evidence" value="ECO:0000315"/>
    <property type="project" value="FlyBase"/>
</dbReference>
<dbReference type="GO" id="GO:0035556">
    <property type="term" value="P:intracellular signal transduction"/>
    <property type="evidence" value="ECO:0000318"/>
    <property type="project" value="GO_Central"/>
</dbReference>
<dbReference type="GO" id="GO:0046834">
    <property type="term" value="P:lipid phosphorylation"/>
    <property type="evidence" value="ECO:0000304"/>
    <property type="project" value="FlyBase"/>
</dbReference>
<dbReference type="GO" id="GO:0016059">
    <property type="term" value="P:negative regulation of opsin-mediated signaling pathway"/>
    <property type="evidence" value="ECO:0000316"/>
    <property type="project" value="FlyBase"/>
</dbReference>
<dbReference type="GO" id="GO:0006654">
    <property type="term" value="P:phosphatidic acid biosynthetic process"/>
    <property type="evidence" value="ECO:0000318"/>
    <property type="project" value="GO_Central"/>
</dbReference>
<dbReference type="GO" id="GO:0006661">
    <property type="term" value="P:phosphatidylinositol biosynthetic process"/>
    <property type="evidence" value="ECO:0000304"/>
    <property type="project" value="FlyBase"/>
</dbReference>
<dbReference type="GO" id="GO:0007200">
    <property type="term" value="P:phospholipase C-activating G protein-coupled receptor signaling pathway"/>
    <property type="evidence" value="ECO:0007669"/>
    <property type="project" value="InterPro"/>
</dbReference>
<dbReference type="GO" id="GO:0045494">
    <property type="term" value="P:photoreceptor cell maintenance"/>
    <property type="evidence" value="ECO:0000304"/>
    <property type="project" value="FlyBase"/>
</dbReference>
<dbReference type="GO" id="GO:0007602">
    <property type="term" value="P:phototransduction"/>
    <property type="evidence" value="ECO:0000315"/>
    <property type="project" value="FlyBase"/>
</dbReference>
<dbReference type="GO" id="GO:0007608">
    <property type="term" value="P:sensory perception of smell"/>
    <property type="evidence" value="ECO:0000315"/>
    <property type="project" value="FlyBase"/>
</dbReference>
<dbReference type="GO" id="GO:0007605">
    <property type="term" value="P:sensory perception of sound"/>
    <property type="evidence" value="ECO:0000315"/>
    <property type="project" value="FlyBase"/>
</dbReference>
<dbReference type="GO" id="GO:0043052">
    <property type="term" value="P:thermotaxis"/>
    <property type="evidence" value="ECO:0000314"/>
    <property type="project" value="FlyBase"/>
</dbReference>
<dbReference type="GO" id="GO:0007601">
    <property type="term" value="P:visual perception"/>
    <property type="evidence" value="ECO:0007669"/>
    <property type="project" value="UniProtKB-KW"/>
</dbReference>
<dbReference type="CDD" id="cd20802">
    <property type="entry name" value="C1_DGK_typeIV_rpt1"/>
    <property type="match status" value="1"/>
</dbReference>
<dbReference type="CDD" id="cd20855">
    <property type="entry name" value="C1_DGK_typeIV_rpt2"/>
    <property type="match status" value="1"/>
</dbReference>
<dbReference type="FunFam" id="1.25.40.20:FF:000204">
    <property type="entry name" value="Diacylglycerol kinase"/>
    <property type="match status" value="1"/>
</dbReference>
<dbReference type="FunFam" id="2.60.200.40:FF:000012">
    <property type="entry name" value="Diacylglycerol kinase"/>
    <property type="match status" value="1"/>
</dbReference>
<dbReference type="FunFam" id="3.40.50.10330:FF:000020">
    <property type="entry name" value="Diacylglycerol kinase"/>
    <property type="match status" value="1"/>
</dbReference>
<dbReference type="Gene3D" id="2.60.200.40">
    <property type="match status" value="1"/>
</dbReference>
<dbReference type="Gene3D" id="1.25.40.20">
    <property type="entry name" value="Ankyrin repeat-containing domain"/>
    <property type="match status" value="1"/>
</dbReference>
<dbReference type="Gene3D" id="3.40.50.10330">
    <property type="entry name" value="Probable inorganic polyphosphate/atp-NAD kinase, domain 1"/>
    <property type="match status" value="1"/>
</dbReference>
<dbReference type="InterPro" id="IPR002110">
    <property type="entry name" value="Ankyrin_rpt"/>
</dbReference>
<dbReference type="InterPro" id="IPR036770">
    <property type="entry name" value="Ankyrin_rpt-contain_sf"/>
</dbReference>
<dbReference type="InterPro" id="IPR017438">
    <property type="entry name" value="ATP-NAD_kinase_N"/>
</dbReference>
<dbReference type="InterPro" id="IPR037607">
    <property type="entry name" value="DGK"/>
</dbReference>
<dbReference type="InterPro" id="IPR056383">
    <property type="entry name" value="DGKI-like_dom"/>
</dbReference>
<dbReference type="InterPro" id="IPR000756">
    <property type="entry name" value="Diacylglycerol_kin_accessory"/>
</dbReference>
<dbReference type="InterPro" id="IPR001206">
    <property type="entry name" value="Diacylglycerol_kinase_cat_dom"/>
</dbReference>
<dbReference type="InterPro" id="IPR016064">
    <property type="entry name" value="NAD/diacylglycerol_kinase_sf"/>
</dbReference>
<dbReference type="InterPro" id="IPR002219">
    <property type="entry name" value="PE/DAG-bd"/>
</dbReference>
<dbReference type="PANTHER" id="PTHR11255">
    <property type="entry name" value="DIACYLGLYCEROL KINASE"/>
    <property type="match status" value="1"/>
</dbReference>
<dbReference type="PANTHER" id="PTHR11255:SF80">
    <property type="entry name" value="EYE-SPECIFIC DIACYLGLYCEROL KINASE"/>
    <property type="match status" value="1"/>
</dbReference>
<dbReference type="Pfam" id="PF12796">
    <property type="entry name" value="Ank_2"/>
    <property type="match status" value="2"/>
</dbReference>
<dbReference type="Pfam" id="PF00130">
    <property type="entry name" value="C1_1"/>
    <property type="match status" value="2"/>
</dbReference>
<dbReference type="Pfam" id="PF00609">
    <property type="entry name" value="DAGK_acc"/>
    <property type="match status" value="1"/>
</dbReference>
<dbReference type="Pfam" id="PF00781">
    <property type="entry name" value="DAGK_cat"/>
    <property type="match status" value="1"/>
</dbReference>
<dbReference type="Pfam" id="PF23578">
    <property type="entry name" value="DGKI"/>
    <property type="match status" value="1"/>
</dbReference>
<dbReference type="SMART" id="SM00248">
    <property type="entry name" value="ANK"/>
    <property type="match status" value="4"/>
</dbReference>
<dbReference type="SMART" id="SM00109">
    <property type="entry name" value="C1"/>
    <property type="match status" value="1"/>
</dbReference>
<dbReference type="SMART" id="SM00045">
    <property type="entry name" value="DAGKa"/>
    <property type="match status" value="1"/>
</dbReference>
<dbReference type="SMART" id="SM00046">
    <property type="entry name" value="DAGKc"/>
    <property type="match status" value="1"/>
</dbReference>
<dbReference type="SUPFAM" id="SSF48403">
    <property type="entry name" value="Ankyrin repeat"/>
    <property type="match status" value="1"/>
</dbReference>
<dbReference type="SUPFAM" id="SSF111331">
    <property type="entry name" value="NAD kinase/diacylglycerol kinase-like"/>
    <property type="match status" value="1"/>
</dbReference>
<dbReference type="PROSITE" id="PS50297">
    <property type="entry name" value="ANK_REP_REGION"/>
    <property type="match status" value="1"/>
</dbReference>
<dbReference type="PROSITE" id="PS50088">
    <property type="entry name" value="ANK_REPEAT"/>
    <property type="match status" value="2"/>
</dbReference>
<dbReference type="PROSITE" id="PS50146">
    <property type="entry name" value="DAGK"/>
    <property type="match status" value="1"/>
</dbReference>
<organism>
    <name type="scientific">Drosophila melanogaster</name>
    <name type="common">Fruit fly</name>
    <dbReference type="NCBI Taxonomy" id="7227"/>
    <lineage>
        <taxon>Eukaryota</taxon>
        <taxon>Metazoa</taxon>
        <taxon>Ecdysozoa</taxon>
        <taxon>Arthropoda</taxon>
        <taxon>Hexapoda</taxon>
        <taxon>Insecta</taxon>
        <taxon>Pterygota</taxon>
        <taxon>Neoptera</taxon>
        <taxon>Endopterygota</taxon>
        <taxon>Diptera</taxon>
        <taxon>Brachycera</taxon>
        <taxon>Muscomorpha</taxon>
        <taxon>Ephydroidea</taxon>
        <taxon>Drosophilidae</taxon>
        <taxon>Drosophila</taxon>
        <taxon>Sophophora</taxon>
    </lineage>
</organism>
<name>DGK2_DROME</name>
<protein>
    <recommendedName>
        <fullName>Eye-specific diacylglycerol kinase</fullName>
        <shortName>DAG kinase 2</shortName>
        <shortName>DGK 2</shortName>
        <shortName>Diglyceride kinase 2</shortName>
        <ecNumber>2.7.1.107</ecNumber>
    </recommendedName>
    <alternativeName>
        <fullName>Retinal degeneration A protein</fullName>
    </alternativeName>
</protein>
<reference key="1">
    <citation type="journal article" date="1993" name="Proc. Natl. Acad. Sci. U.S.A.">
        <title>Drosophila retinal degeneration A gene encodes an eye-specific diacylglycerol kinase with cysteine-rich zinc-finger motifs and ankyrin repeats.</title>
        <authorList>
            <person name="Masai I."/>
            <person name="Okazaki A."/>
            <person name="Hosoya T."/>
            <person name="Hotta Y."/>
        </authorList>
    </citation>
    <scope>NUCLEOTIDE SEQUENCE [MRNA] (ISOFORM A)</scope>
    <scope>FUNCTION</scope>
    <scope>TISSUE SPECIFICITY</scope>
    <scope>DISRUPTION PHENOTYPE</scope>
    <source>
        <strain>Canton-S</strain>
        <tissue>Head</tissue>
    </source>
</reference>
<reference key="2">
    <citation type="journal article" date="2000" name="Science">
        <title>The genome sequence of Drosophila melanogaster.</title>
        <authorList>
            <person name="Adams M.D."/>
            <person name="Celniker S.E."/>
            <person name="Holt R.A."/>
            <person name="Evans C.A."/>
            <person name="Gocayne J.D."/>
            <person name="Amanatides P.G."/>
            <person name="Scherer S.E."/>
            <person name="Li P.W."/>
            <person name="Hoskins R.A."/>
            <person name="Galle R.F."/>
            <person name="George R.A."/>
            <person name="Lewis S.E."/>
            <person name="Richards S."/>
            <person name="Ashburner M."/>
            <person name="Henderson S.N."/>
            <person name="Sutton G.G."/>
            <person name="Wortman J.R."/>
            <person name="Yandell M.D."/>
            <person name="Zhang Q."/>
            <person name="Chen L.X."/>
            <person name="Brandon R.C."/>
            <person name="Rogers Y.-H.C."/>
            <person name="Blazej R.G."/>
            <person name="Champe M."/>
            <person name="Pfeiffer B.D."/>
            <person name="Wan K.H."/>
            <person name="Doyle C."/>
            <person name="Baxter E.G."/>
            <person name="Helt G."/>
            <person name="Nelson C.R."/>
            <person name="Miklos G.L.G."/>
            <person name="Abril J.F."/>
            <person name="Agbayani A."/>
            <person name="An H.-J."/>
            <person name="Andrews-Pfannkoch C."/>
            <person name="Baldwin D."/>
            <person name="Ballew R.M."/>
            <person name="Basu A."/>
            <person name="Baxendale J."/>
            <person name="Bayraktaroglu L."/>
            <person name="Beasley E.M."/>
            <person name="Beeson K.Y."/>
            <person name="Benos P.V."/>
            <person name="Berman B.P."/>
            <person name="Bhandari D."/>
            <person name="Bolshakov S."/>
            <person name="Borkova D."/>
            <person name="Botchan M.R."/>
            <person name="Bouck J."/>
            <person name="Brokstein P."/>
            <person name="Brottier P."/>
            <person name="Burtis K.C."/>
            <person name="Busam D.A."/>
            <person name="Butler H."/>
            <person name="Cadieu E."/>
            <person name="Center A."/>
            <person name="Chandra I."/>
            <person name="Cherry J.M."/>
            <person name="Cawley S."/>
            <person name="Dahlke C."/>
            <person name="Davenport L.B."/>
            <person name="Davies P."/>
            <person name="de Pablos B."/>
            <person name="Delcher A."/>
            <person name="Deng Z."/>
            <person name="Mays A.D."/>
            <person name="Dew I."/>
            <person name="Dietz S.M."/>
            <person name="Dodson K."/>
            <person name="Doup L.E."/>
            <person name="Downes M."/>
            <person name="Dugan-Rocha S."/>
            <person name="Dunkov B.C."/>
            <person name="Dunn P."/>
            <person name="Durbin K.J."/>
            <person name="Evangelista C.C."/>
            <person name="Ferraz C."/>
            <person name="Ferriera S."/>
            <person name="Fleischmann W."/>
            <person name="Fosler C."/>
            <person name="Gabrielian A.E."/>
            <person name="Garg N.S."/>
            <person name="Gelbart W.M."/>
            <person name="Glasser K."/>
            <person name="Glodek A."/>
            <person name="Gong F."/>
            <person name="Gorrell J.H."/>
            <person name="Gu Z."/>
            <person name="Guan P."/>
            <person name="Harris M."/>
            <person name="Harris N.L."/>
            <person name="Harvey D.A."/>
            <person name="Heiman T.J."/>
            <person name="Hernandez J.R."/>
            <person name="Houck J."/>
            <person name="Hostin D."/>
            <person name="Houston K.A."/>
            <person name="Howland T.J."/>
            <person name="Wei M.-H."/>
            <person name="Ibegwam C."/>
            <person name="Jalali M."/>
            <person name="Kalush F."/>
            <person name="Karpen G.H."/>
            <person name="Ke Z."/>
            <person name="Kennison J.A."/>
            <person name="Ketchum K.A."/>
            <person name="Kimmel B.E."/>
            <person name="Kodira C.D."/>
            <person name="Kraft C.L."/>
            <person name="Kravitz S."/>
            <person name="Kulp D."/>
            <person name="Lai Z."/>
            <person name="Lasko P."/>
            <person name="Lei Y."/>
            <person name="Levitsky A.A."/>
            <person name="Li J.H."/>
            <person name="Li Z."/>
            <person name="Liang Y."/>
            <person name="Lin X."/>
            <person name="Liu X."/>
            <person name="Mattei B."/>
            <person name="McIntosh T.C."/>
            <person name="McLeod M.P."/>
            <person name="McPherson D."/>
            <person name="Merkulov G."/>
            <person name="Milshina N.V."/>
            <person name="Mobarry C."/>
            <person name="Morris J."/>
            <person name="Moshrefi A."/>
            <person name="Mount S.M."/>
            <person name="Moy M."/>
            <person name="Murphy B."/>
            <person name="Murphy L."/>
            <person name="Muzny D.M."/>
            <person name="Nelson D.L."/>
            <person name="Nelson D.R."/>
            <person name="Nelson K.A."/>
            <person name="Nixon K."/>
            <person name="Nusskern D.R."/>
            <person name="Pacleb J.M."/>
            <person name="Palazzolo M."/>
            <person name="Pittman G.S."/>
            <person name="Pan S."/>
            <person name="Pollard J."/>
            <person name="Puri V."/>
            <person name="Reese M.G."/>
            <person name="Reinert K."/>
            <person name="Remington K."/>
            <person name="Saunders R.D.C."/>
            <person name="Scheeler F."/>
            <person name="Shen H."/>
            <person name="Shue B.C."/>
            <person name="Siden-Kiamos I."/>
            <person name="Simpson M."/>
            <person name="Skupski M.P."/>
            <person name="Smith T.J."/>
            <person name="Spier E."/>
            <person name="Spradling A.C."/>
            <person name="Stapleton M."/>
            <person name="Strong R."/>
            <person name="Sun E."/>
            <person name="Svirskas R."/>
            <person name="Tector C."/>
            <person name="Turner R."/>
            <person name="Venter E."/>
            <person name="Wang A.H."/>
            <person name="Wang X."/>
            <person name="Wang Z.-Y."/>
            <person name="Wassarman D.A."/>
            <person name="Weinstock G.M."/>
            <person name="Weissenbach J."/>
            <person name="Williams S.M."/>
            <person name="Woodage T."/>
            <person name="Worley K.C."/>
            <person name="Wu D."/>
            <person name="Yang S."/>
            <person name="Yao Q.A."/>
            <person name="Ye J."/>
            <person name="Yeh R.-F."/>
            <person name="Zaveri J.S."/>
            <person name="Zhan M."/>
            <person name="Zhang G."/>
            <person name="Zhao Q."/>
            <person name="Zheng L."/>
            <person name="Zheng X.H."/>
            <person name="Zhong F.N."/>
            <person name="Zhong W."/>
            <person name="Zhou X."/>
            <person name="Zhu S.C."/>
            <person name="Zhu X."/>
            <person name="Smith H.O."/>
            <person name="Gibbs R.A."/>
            <person name="Myers E.W."/>
            <person name="Rubin G.M."/>
            <person name="Venter J.C."/>
        </authorList>
    </citation>
    <scope>NUCLEOTIDE SEQUENCE [LARGE SCALE GENOMIC DNA]</scope>
    <source>
        <strain>Berkeley</strain>
    </source>
</reference>
<reference key="3">
    <citation type="journal article" date="2002" name="Genome Biol.">
        <title>Annotation of the Drosophila melanogaster euchromatic genome: a systematic review.</title>
        <authorList>
            <person name="Misra S."/>
            <person name="Crosby M.A."/>
            <person name="Mungall C.J."/>
            <person name="Matthews B.B."/>
            <person name="Campbell K.S."/>
            <person name="Hradecky P."/>
            <person name="Huang Y."/>
            <person name="Kaminker J.S."/>
            <person name="Millburn G.H."/>
            <person name="Prochnik S.E."/>
            <person name="Smith C.D."/>
            <person name="Tupy J.L."/>
            <person name="Whitfield E.J."/>
            <person name="Bayraktaroglu L."/>
            <person name="Berman B.P."/>
            <person name="Bettencourt B.R."/>
            <person name="Celniker S.E."/>
            <person name="de Grey A.D.N.J."/>
            <person name="Drysdale R.A."/>
            <person name="Harris N.L."/>
            <person name="Richter J."/>
            <person name="Russo S."/>
            <person name="Schroeder A.J."/>
            <person name="Shu S.Q."/>
            <person name="Stapleton M."/>
            <person name="Yamada C."/>
            <person name="Ashburner M."/>
            <person name="Gelbart W.M."/>
            <person name="Rubin G.M."/>
            <person name="Lewis S.E."/>
        </authorList>
    </citation>
    <scope>GENOME REANNOTATION</scope>
    <scope>ALTERNATIVE SPLICING</scope>
    <source>
        <strain>Berkeley</strain>
    </source>
</reference>
<reference key="4">
    <citation type="journal article" date="2002" name="Genome Biol.">
        <title>A Drosophila full-length cDNA resource.</title>
        <authorList>
            <person name="Stapleton M."/>
            <person name="Carlson J.W."/>
            <person name="Brokstein P."/>
            <person name="Yu C."/>
            <person name="Champe M."/>
            <person name="George R.A."/>
            <person name="Guarin H."/>
            <person name="Kronmiller B."/>
            <person name="Pacleb J.M."/>
            <person name="Park S."/>
            <person name="Wan K.H."/>
            <person name="Rubin G.M."/>
            <person name="Celniker S.E."/>
        </authorList>
    </citation>
    <scope>NUCLEOTIDE SEQUENCE [LARGE SCALE MRNA] (ISOFORM A)</scope>
    <source>
        <strain>Berkeley</strain>
        <tissue>Head</tissue>
    </source>
</reference>
<reference key="5">
    <citation type="submission" date="2003-08" db="EMBL/GenBank/DDBJ databases">
        <authorList>
            <person name="Stapleton M."/>
            <person name="Brokstein P."/>
            <person name="Hong L."/>
            <person name="Agbayani A."/>
            <person name="Carlson J.W."/>
            <person name="Champe M."/>
            <person name="Chavez C."/>
            <person name="Dorsett V."/>
            <person name="Dresnek D."/>
            <person name="Farfan D."/>
            <person name="Frise E."/>
            <person name="George R.A."/>
            <person name="Gonzalez M."/>
            <person name="Guarin H."/>
            <person name="Kronmiller B."/>
            <person name="Li P.W."/>
            <person name="Liao G."/>
            <person name="Miranda A."/>
            <person name="Mungall C.J."/>
            <person name="Nunoo J."/>
            <person name="Pacleb J.M."/>
            <person name="Paragas V."/>
            <person name="Park S."/>
            <person name="Patel S."/>
            <person name="Phouanenavong S."/>
            <person name="Wan K.H."/>
            <person name="Yu C."/>
            <person name="Lewis S.E."/>
            <person name="Rubin G.M."/>
            <person name="Celniker S.E."/>
        </authorList>
    </citation>
    <scope>NUCLEOTIDE SEQUENCE [LARGE SCALE MRNA] (ISOFORM B)</scope>
    <source>
        <strain>Berkeley</strain>
        <tissue>Head</tissue>
    </source>
</reference>
<keyword id="KW-0025">Alternative splicing</keyword>
<keyword id="KW-0040">ANK repeat</keyword>
<keyword id="KW-0067">ATP-binding</keyword>
<keyword id="KW-0418">Kinase</keyword>
<keyword id="KW-0472">Membrane</keyword>
<keyword id="KW-0479">Metal-binding</keyword>
<keyword id="KW-0547">Nucleotide-binding</keyword>
<keyword id="KW-1185">Reference proteome</keyword>
<keyword id="KW-0677">Repeat</keyword>
<keyword id="KW-0716">Sensory transduction</keyword>
<keyword id="KW-0808">Transferase</keyword>
<keyword id="KW-0844">Vision</keyword>
<keyword id="KW-0862">Zinc</keyword>
<keyword id="KW-0863">Zinc-finger</keyword>